<gene>
    <name evidence="1" type="primary">rplD</name>
    <name type="ordered locus">RSc3018</name>
    <name type="ORF">RS04739</name>
</gene>
<accession>Q8XV13</accession>
<comment type="function">
    <text evidence="1">One of the primary rRNA binding proteins, this protein initially binds near the 5'-end of the 23S rRNA. It is important during the early stages of 50S assembly. It makes multiple contacts with different domains of the 23S rRNA in the assembled 50S subunit and ribosome.</text>
</comment>
<comment type="function">
    <text evidence="1">Forms part of the polypeptide exit tunnel.</text>
</comment>
<comment type="subunit">
    <text evidence="1">Part of the 50S ribosomal subunit.</text>
</comment>
<comment type="similarity">
    <text evidence="1">Belongs to the universal ribosomal protein uL4 family.</text>
</comment>
<protein>
    <recommendedName>
        <fullName evidence="1">Large ribosomal subunit protein uL4</fullName>
    </recommendedName>
    <alternativeName>
        <fullName evidence="3">50S ribosomal protein L4</fullName>
    </alternativeName>
</protein>
<sequence length="206" mass="22948">MELKLLQADGQLGTGVSASPEVFGRDYNEALVHQIVVAYQANARSGNRKQKDREEVKHTTKKPWRQKGTGRARAGMSSSPLWRGGGRIFPNSPEENFSQKVNKKMYRAGMRSIYSQLAREGRINVVDSLSVDAPKTKLLADKFRAMGLDSVLVITDNLDENLFLASRNLAHVLVVEPRHADPLSLVHYKKVLVTKAAVAQIEELLK</sequence>
<dbReference type="EMBL" id="AL646052">
    <property type="protein sequence ID" value="CAD16727.1"/>
    <property type="molecule type" value="Genomic_DNA"/>
</dbReference>
<dbReference type="RefSeq" id="WP_011002916.1">
    <property type="nucleotide sequence ID" value="NC_003295.1"/>
</dbReference>
<dbReference type="SMR" id="Q8XV13"/>
<dbReference type="STRING" id="267608.RSc3018"/>
<dbReference type="EnsemblBacteria" id="CAD16727">
    <property type="protein sequence ID" value="CAD16727"/>
    <property type="gene ID" value="RSc3018"/>
</dbReference>
<dbReference type="GeneID" id="93851180"/>
<dbReference type="KEGG" id="rso:RSc3018"/>
<dbReference type="eggNOG" id="COG0088">
    <property type="taxonomic scope" value="Bacteria"/>
</dbReference>
<dbReference type="HOGENOM" id="CLU_041575_5_2_4"/>
<dbReference type="Proteomes" id="UP000001436">
    <property type="component" value="Chromosome"/>
</dbReference>
<dbReference type="GO" id="GO:1990904">
    <property type="term" value="C:ribonucleoprotein complex"/>
    <property type="evidence" value="ECO:0007669"/>
    <property type="project" value="UniProtKB-KW"/>
</dbReference>
<dbReference type="GO" id="GO:0005840">
    <property type="term" value="C:ribosome"/>
    <property type="evidence" value="ECO:0007669"/>
    <property type="project" value="UniProtKB-KW"/>
</dbReference>
<dbReference type="GO" id="GO:0019843">
    <property type="term" value="F:rRNA binding"/>
    <property type="evidence" value="ECO:0007669"/>
    <property type="project" value="UniProtKB-UniRule"/>
</dbReference>
<dbReference type="GO" id="GO:0003735">
    <property type="term" value="F:structural constituent of ribosome"/>
    <property type="evidence" value="ECO:0007669"/>
    <property type="project" value="InterPro"/>
</dbReference>
<dbReference type="GO" id="GO:0006412">
    <property type="term" value="P:translation"/>
    <property type="evidence" value="ECO:0007669"/>
    <property type="project" value="UniProtKB-UniRule"/>
</dbReference>
<dbReference type="Gene3D" id="3.40.1370.10">
    <property type="match status" value="1"/>
</dbReference>
<dbReference type="HAMAP" id="MF_01328_B">
    <property type="entry name" value="Ribosomal_uL4_B"/>
    <property type="match status" value="1"/>
</dbReference>
<dbReference type="InterPro" id="IPR002136">
    <property type="entry name" value="Ribosomal_uL4"/>
</dbReference>
<dbReference type="InterPro" id="IPR013005">
    <property type="entry name" value="Ribosomal_uL4-like"/>
</dbReference>
<dbReference type="InterPro" id="IPR023574">
    <property type="entry name" value="Ribosomal_uL4_dom_sf"/>
</dbReference>
<dbReference type="NCBIfam" id="TIGR03953">
    <property type="entry name" value="rplD_bact"/>
    <property type="match status" value="1"/>
</dbReference>
<dbReference type="PANTHER" id="PTHR10746">
    <property type="entry name" value="50S RIBOSOMAL PROTEIN L4"/>
    <property type="match status" value="1"/>
</dbReference>
<dbReference type="PANTHER" id="PTHR10746:SF6">
    <property type="entry name" value="LARGE RIBOSOMAL SUBUNIT PROTEIN UL4M"/>
    <property type="match status" value="1"/>
</dbReference>
<dbReference type="Pfam" id="PF00573">
    <property type="entry name" value="Ribosomal_L4"/>
    <property type="match status" value="1"/>
</dbReference>
<dbReference type="SUPFAM" id="SSF52166">
    <property type="entry name" value="Ribosomal protein L4"/>
    <property type="match status" value="1"/>
</dbReference>
<keyword id="KW-1185">Reference proteome</keyword>
<keyword id="KW-0687">Ribonucleoprotein</keyword>
<keyword id="KW-0689">Ribosomal protein</keyword>
<keyword id="KW-0694">RNA-binding</keyword>
<keyword id="KW-0699">rRNA-binding</keyword>
<proteinExistence type="inferred from homology"/>
<evidence type="ECO:0000255" key="1">
    <source>
        <dbReference type="HAMAP-Rule" id="MF_01328"/>
    </source>
</evidence>
<evidence type="ECO:0000256" key="2">
    <source>
        <dbReference type="SAM" id="MobiDB-lite"/>
    </source>
</evidence>
<evidence type="ECO:0000305" key="3"/>
<feature type="chain" id="PRO_0000129262" description="Large ribosomal subunit protein uL4">
    <location>
        <begin position="1"/>
        <end position="206"/>
    </location>
</feature>
<feature type="region of interest" description="Disordered" evidence="2">
    <location>
        <begin position="43"/>
        <end position="78"/>
    </location>
</feature>
<feature type="compositionally biased region" description="Basic and acidic residues" evidence="2">
    <location>
        <begin position="49"/>
        <end position="58"/>
    </location>
</feature>
<feature type="compositionally biased region" description="Basic residues" evidence="2">
    <location>
        <begin position="59"/>
        <end position="70"/>
    </location>
</feature>
<reference key="1">
    <citation type="journal article" date="2002" name="Nature">
        <title>Genome sequence of the plant pathogen Ralstonia solanacearum.</title>
        <authorList>
            <person name="Salanoubat M."/>
            <person name="Genin S."/>
            <person name="Artiguenave F."/>
            <person name="Gouzy J."/>
            <person name="Mangenot S."/>
            <person name="Arlat M."/>
            <person name="Billault A."/>
            <person name="Brottier P."/>
            <person name="Camus J.-C."/>
            <person name="Cattolico L."/>
            <person name="Chandler M."/>
            <person name="Choisne N."/>
            <person name="Claudel-Renard C."/>
            <person name="Cunnac S."/>
            <person name="Demange N."/>
            <person name="Gaspin C."/>
            <person name="Lavie M."/>
            <person name="Moisan A."/>
            <person name="Robert C."/>
            <person name="Saurin W."/>
            <person name="Schiex T."/>
            <person name="Siguier P."/>
            <person name="Thebault P."/>
            <person name="Whalen M."/>
            <person name="Wincker P."/>
            <person name="Levy M."/>
            <person name="Weissenbach J."/>
            <person name="Boucher C.A."/>
        </authorList>
    </citation>
    <scope>NUCLEOTIDE SEQUENCE [LARGE SCALE GENOMIC DNA]</scope>
    <source>
        <strain>ATCC BAA-1114 / GMI1000</strain>
    </source>
</reference>
<name>RL4_RALN1</name>
<organism>
    <name type="scientific">Ralstonia nicotianae (strain ATCC BAA-1114 / GMI1000)</name>
    <name type="common">Ralstonia solanacearum</name>
    <dbReference type="NCBI Taxonomy" id="267608"/>
    <lineage>
        <taxon>Bacteria</taxon>
        <taxon>Pseudomonadati</taxon>
        <taxon>Pseudomonadota</taxon>
        <taxon>Betaproteobacteria</taxon>
        <taxon>Burkholderiales</taxon>
        <taxon>Burkholderiaceae</taxon>
        <taxon>Ralstonia</taxon>
        <taxon>Ralstonia solanacearum species complex</taxon>
    </lineage>
</organism>